<feature type="chain" id="PRO_0000190039" description="Protein unc-93 homolog A">
    <location>
        <begin position="1"/>
        <end position="465"/>
    </location>
</feature>
<feature type="transmembrane region" description="Helical" evidence="1">
    <location>
        <begin position="8"/>
        <end position="28"/>
    </location>
</feature>
<feature type="transmembrane region" description="Helical" evidence="1">
    <location>
        <begin position="40"/>
        <end position="60"/>
    </location>
</feature>
<feature type="transmembrane region" description="Helical" evidence="1">
    <location>
        <begin position="71"/>
        <end position="91"/>
    </location>
</feature>
<feature type="transmembrane region" description="Helical" evidence="1">
    <location>
        <begin position="96"/>
        <end position="118"/>
    </location>
</feature>
<feature type="transmembrane region" description="Helical" evidence="1">
    <location>
        <begin position="140"/>
        <end position="160"/>
    </location>
</feature>
<feature type="transmembrane region" description="Helical" evidence="1">
    <location>
        <begin position="200"/>
        <end position="220"/>
    </location>
</feature>
<feature type="transmembrane region" description="Helical" evidence="1">
    <location>
        <begin position="256"/>
        <end position="276"/>
    </location>
</feature>
<feature type="transmembrane region" description="Helical" evidence="1">
    <location>
        <begin position="281"/>
        <end position="301"/>
    </location>
</feature>
<feature type="transmembrane region" description="Helical" evidence="1">
    <location>
        <begin position="319"/>
        <end position="339"/>
    </location>
</feature>
<feature type="transmembrane region" description="Helical" evidence="1">
    <location>
        <begin position="343"/>
        <end position="363"/>
    </location>
</feature>
<feature type="transmembrane region" description="Helical" evidence="1">
    <location>
        <begin position="410"/>
        <end position="427"/>
    </location>
</feature>
<feature type="glycosylation site" description="N-linked (GlcNAc...) asparagine" evidence="1">
    <location>
        <position position="183"/>
    </location>
</feature>
<feature type="glycosylation site" description="N-linked (GlcNAc...) asparagine" evidence="1">
    <location>
        <position position="189"/>
    </location>
</feature>
<feature type="glycosylation site" description="N-linked (GlcNAc...) asparagine" evidence="1">
    <location>
        <position position="237"/>
    </location>
</feature>
<evidence type="ECO:0000255" key="1"/>
<evidence type="ECO:0000305" key="2"/>
<name>UN93A_DANRE</name>
<sequence length="465" mass="51665">MSRNTKNVLVVSFGFLLLFTAYGGLQSLQSSLNAEEGMGVISLSVIYAAIILSSMFLPPIMIKNLGCKWTIVVSMGCYVAYSFGNLAPGWASLMSTSAILGMGGSPLWSAKCTYLTISGNRQGQKHNKKGQDLINQYFGIFFFIFQSSGVWGNLMSSLIFGQDQNIVPKENLEFCGVSTCLDNFTVIGNSTRPSKHLVDTLLGCYIGVGLLAIIFVAVFLDNIDRDEAKEFRSTKGNKSFWDTFLATFKLLRDPRLLLLIPLTMYSGFEQSFLSGEYTKNYVTCALGIHNVGFVMICFAASNSLCSFAFGRLAQYTGRIALFCLAAAINLGSFLGLLYWKPHPDQLAIFFVFPALWGMADAVWQTQTNALYGILFAKNKEAAFANYRMWESLGFVIAFAYSTFICLSTKIYIALAVLALTMVTYLYVEYNEYKHPTPQVTEDFLKPIKPKLKDDKEDNIISQTQL</sequence>
<keyword id="KW-0325">Glycoprotein</keyword>
<keyword id="KW-0472">Membrane</keyword>
<keyword id="KW-1185">Reference proteome</keyword>
<keyword id="KW-0812">Transmembrane</keyword>
<keyword id="KW-1133">Transmembrane helix</keyword>
<proteinExistence type="inferred from homology"/>
<reference key="1">
    <citation type="journal article" date="2013" name="Nature">
        <title>The zebrafish reference genome sequence and its relationship to the human genome.</title>
        <authorList>
            <person name="Howe K."/>
            <person name="Clark M.D."/>
            <person name="Torroja C.F."/>
            <person name="Torrance J."/>
            <person name="Berthelot C."/>
            <person name="Muffato M."/>
            <person name="Collins J.E."/>
            <person name="Humphray S."/>
            <person name="McLaren K."/>
            <person name="Matthews L."/>
            <person name="McLaren S."/>
            <person name="Sealy I."/>
            <person name="Caccamo M."/>
            <person name="Churcher C."/>
            <person name="Scott C."/>
            <person name="Barrett J.C."/>
            <person name="Koch R."/>
            <person name="Rauch G.J."/>
            <person name="White S."/>
            <person name="Chow W."/>
            <person name="Kilian B."/>
            <person name="Quintais L.T."/>
            <person name="Guerra-Assuncao J.A."/>
            <person name="Zhou Y."/>
            <person name="Gu Y."/>
            <person name="Yen J."/>
            <person name="Vogel J.H."/>
            <person name="Eyre T."/>
            <person name="Redmond S."/>
            <person name="Banerjee R."/>
            <person name="Chi J."/>
            <person name="Fu B."/>
            <person name="Langley E."/>
            <person name="Maguire S.F."/>
            <person name="Laird G.K."/>
            <person name="Lloyd D."/>
            <person name="Kenyon E."/>
            <person name="Donaldson S."/>
            <person name="Sehra H."/>
            <person name="Almeida-King J."/>
            <person name="Loveland J."/>
            <person name="Trevanion S."/>
            <person name="Jones M."/>
            <person name="Quail M."/>
            <person name="Willey D."/>
            <person name="Hunt A."/>
            <person name="Burton J."/>
            <person name="Sims S."/>
            <person name="McLay K."/>
            <person name="Plumb B."/>
            <person name="Davis J."/>
            <person name="Clee C."/>
            <person name="Oliver K."/>
            <person name="Clark R."/>
            <person name="Riddle C."/>
            <person name="Elliot D."/>
            <person name="Threadgold G."/>
            <person name="Harden G."/>
            <person name="Ware D."/>
            <person name="Begum S."/>
            <person name="Mortimore B."/>
            <person name="Kerry G."/>
            <person name="Heath P."/>
            <person name="Phillimore B."/>
            <person name="Tracey A."/>
            <person name="Corby N."/>
            <person name="Dunn M."/>
            <person name="Johnson C."/>
            <person name="Wood J."/>
            <person name="Clark S."/>
            <person name="Pelan S."/>
            <person name="Griffiths G."/>
            <person name="Smith M."/>
            <person name="Glithero R."/>
            <person name="Howden P."/>
            <person name="Barker N."/>
            <person name="Lloyd C."/>
            <person name="Stevens C."/>
            <person name="Harley J."/>
            <person name="Holt K."/>
            <person name="Panagiotidis G."/>
            <person name="Lovell J."/>
            <person name="Beasley H."/>
            <person name="Henderson C."/>
            <person name="Gordon D."/>
            <person name="Auger K."/>
            <person name="Wright D."/>
            <person name="Collins J."/>
            <person name="Raisen C."/>
            <person name="Dyer L."/>
            <person name="Leung K."/>
            <person name="Robertson L."/>
            <person name="Ambridge K."/>
            <person name="Leongamornlert D."/>
            <person name="McGuire S."/>
            <person name="Gilderthorp R."/>
            <person name="Griffiths C."/>
            <person name="Manthravadi D."/>
            <person name="Nichol S."/>
            <person name="Barker G."/>
            <person name="Whitehead S."/>
            <person name="Kay M."/>
            <person name="Brown J."/>
            <person name="Murnane C."/>
            <person name="Gray E."/>
            <person name="Humphries M."/>
            <person name="Sycamore N."/>
            <person name="Barker D."/>
            <person name="Saunders D."/>
            <person name="Wallis J."/>
            <person name="Babbage A."/>
            <person name="Hammond S."/>
            <person name="Mashreghi-Mohammadi M."/>
            <person name="Barr L."/>
            <person name="Martin S."/>
            <person name="Wray P."/>
            <person name="Ellington A."/>
            <person name="Matthews N."/>
            <person name="Ellwood M."/>
            <person name="Woodmansey R."/>
            <person name="Clark G."/>
            <person name="Cooper J."/>
            <person name="Tromans A."/>
            <person name="Grafham D."/>
            <person name="Skuce C."/>
            <person name="Pandian R."/>
            <person name="Andrews R."/>
            <person name="Harrison E."/>
            <person name="Kimberley A."/>
            <person name="Garnett J."/>
            <person name="Fosker N."/>
            <person name="Hall R."/>
            <person name="Garner P."/>
            <person name="Kelly D."/>
            <person name="Bird C."/>
            <person name="Palmer S."/>
            <person name="Gehring I."/>
            <person name="Berger A."/>
            <person name="Dooley C.M."/>
            <person name="Ersan-Urun Z."/>
            <person name="Eser C."/>
            <person name="Geiger H."/>
            <person name="Geisler M."/>
            <person name="Karotki L."/>
            <person name="Kirn A."/>
            <person name="Konantz J."/>
            <person name="Konantz M."/>
            <person name="Oberlander M."/>
            <person name="Rudolph-Geiger S."/>
            <person name="Teucke M."/>
            <person name="Lanz C."/>
            <person name="Raddatz G."/>
            <person name="Osoegawa K."/>
            <person name="Zhu B."/>
            <person name="Rapp A."/>
            <person name="Widaa S."/>
            <person name="Langford C."/>
            <person name="Yang F."/>
            <person name="Schuster S.C."/>
            <person name="Carter N.P."/>
            <person name="Harrow J."/>
            <person name="Ning Z."/>
            <person name="Herrero J."/>
            <person name="Searle S.M."/>
            <person name="Enright A."/>
            <person name="Geisler R."/>
            <person name="Plasterk R.H."/>
            <person name="Lee C."/>
            <person name="Westerfield M."/>
            <person name="de Jong P.J."/>
            <person name="Zon L.I."/>
            <person name="Postlethwait J.H."/>
            <person name="Nusslein-Volhard C."/>
            <person name="Hubbard T.J."/>
            <person name="Roest Crollius H."/>
            <person name="Rogers J."/>
            <person name="Stemple D.L."/>
        </authorList>
    </citation>
    <scope>NUCLEOTIDE SEQUENCE [LARGE SCALE GENOMIC DNA]</scope>
    <source>
        <strain>Tuebingen</strain>
    </source>
</reference>
<accession>Q5SPF7</accession>
<organism>
    <name type="scientific">Danio rerio</name>
    <name type="common">Zebrafish</name>
    <name type="synonym">Brachydanio rerio</name>
    <dbReference type="NCBI Taxonomy" id="7955"/>
    <lineage>
        <taxon>Eukaryota</taxon>
        <taxon>Metazoa</taxon>
        <taxon>Chordata</taxon>
        <taxon>Craniata</taxon>
        <taxon>Vertebrata</taxon>
        <taxon>Euteleostomi</taxon>
        <taxon>Actinopterygii</taxon>
        <taxon>Neopterygii</taxon>
        <taxon>Teleostei</taxon>
        <taxon>Ostariophysi</taxon>
        <taxon>Cypriniformes</taxon>
        <taxon>Danionidae</taxon>
        <taxon>Danioninae</taxon>
        <taxon>Danio</taxon>
    </lineage>
</organism>
<dbReference type="EMBL" id="AL928920">
    <property type="protein sequence ID" value="CAI20660.1"/>
    <property type="molecule type" value="Genomic_DNA"/>
</dbReference>
<dbReference type="RefSeq" id="NP_001038381.1">
    <property type="nucleotide sequence ID" value="NM_001044916.1"/>
</dbReference>
<dbReference type="SMR" id="Q5SPF7"/>
<dbReference type="FunCoup" id="Q5SPF7">
    <property type="interactions" value="978"/>
</dbReference>
<dbReference type="STRING" id="7955.ENSDARP00000121615"/>
<dbReference type="GlyCosmos" id="Q5SPF7">
    <property type="glycosylation" value="3 sites, No reported glycans"/>
</dbReference>
<dbReference type="PaxDb" id="7955-ENSDARP00000121615"/>
<dbReference type="Ensembl" id="ENSDART00000186486">
    <property type="protein sequence ID" value="ENSDARP00000152201"/>
    <property type="gene ID" value="ENSDARG00000041554"/>
</dbReference>
<dbReference type="GeneID" id="559995"/>
<dbReference type="KEGG" id="dre:559995"/>
<dbReference type="AGR" id="ZFIN:ZDB-GENE-041014-304"/>
<dbReference type="CTD" id="54346"/>
<dbReference type="ZFIN" id="ZDB-GENE-041014-304">
    <property type="gene designation" value="unc93a"/>
</dbReference>
<dbReference type="eggNOG" id="KOG3097">
    <property type="taxonomic scope" value="Eukaryota"/>
</dbReference>
<dbReference type="InParanoid" id="Q5SPF7"/>
<dbReference type="OrthoDB" id="78663at2759"/>
<dbReference type="PhylomeDB" id="Q5SPF7"/>
<dbReference type="PRO" id="PR:Q5SPF7"/>
<dbReference type="Proteomes" id="UP000000437">
    <property type="component" value="Chromosome 20"/>
</dbReference>
<dbReference type="Bgee" id="ENSDARG00000041554">
    <property type="expression patterns" value="Expressed in intestine and 4 other cell types or tissues"/>
</dbReference>
<dbReference type="ExpressionAtlas" id="Q5SPF7">
    <property type="expression patterns" value="baseline"/>
</dbReference>
<dbReference type="GO" id="GO:0016020">
    <property type="term" value="C:membrane"/>
    <property type="evidence" value="ECO:0007669"/>
    <property type="project" value="UniProtKB-SubCell"/>
</dbReference>
<dbReference type="CDD" id="cd17406">
    <property type="entry name" value="MFS_unc93A_like"/>
    <property type="match status" value="1"/>
</dbReference>
<dbReference type="FunFam" id="1.20.1250.20:FF:000290">
    <property type="entry name" value="Unc-93 homolog A"/>
    <property type="match status" value="1"/>
</dbReference>
<dbReference type="Gene3D" id="1.20.1250.20">
    <property type="entry name" value="MFS general substrate transporter like domains"/>
    <property type="match status" value="1"/>
</dbReference>
<dbReference type="InterPro" id="IPR010291">
    <property type="entry name" value="Ion_channel_UNC-93"/>
</dbReference>
<dbReference type="InterPro" id="IPR036259">
    <property type="entry name" value="MFS_trans_sf"/>
</dbReference>
<dbReference type="InterPro" id="IPR051951">
    <property type="entry name" value="UNC-93_regulatory"/>
</dbReference>
<dbReference type="PANTHER" id="PTHR19444:SF13">
    <property type="entry name" value="PROTEIN UNC-93 HOMOLOG A"/>
    <property type="match status" value="1"/>
</dbReference>
<dbReference type="PANTHER" id="PTHR19444">
    <property type="entry name" value="UNC-93 RELATED"/>
    <property type="match status" value="1"/>
</dbReference>
<dbReference type="Pfam" id="PF05978">
    <property type="entry name" value="UNC-93"/>
    <property type="match status" value="2"/>
</dbReference>
<dbReference type="SUPFAM" id="SSF103473">
    <property type="entry name" value="MFS general substrate transporter"/>
    <property type="match status" value="1"/>
</dbReference>
<comment type="subcellular location">
    <subcellularLocation>
        <location evidence="2">Membrane</location>
        <topology evidence="2">Multi-pass membrane protein</topology>
    </subcellularLocation>
</comment>
<comment type="similarity">
    <text evidence="2">Belongs to the unc-93 family.</text>
</comment>
<protein>
    <recommendedName>
        <fullName>Protein unc-93 homolog A</fullName>
        <shortName>Unc-93A</shortName>
    </recommendedName>
</protein>
<gene>
    <name type="primary">unc93a</name>
    <name type="ORF">si:dkey-14a7.1</name>
</gene>